<accession>Q50103</accession>
<accession>Q9CBE4</accession>
<protein>
    <recommendedName>
        <fullName evidence="1">Divalent metal cation transporter MntH</fullName>
    </recommendedName>
</protein>
<proteinExistence type="inferred from homology"/>
<comment type="function">
    <text evidence="1">H(+)-stimulated, divalent metal cation uptake system.</text>
</comment>
<comment type="subcellular location">
    <subcellularLocation>
        <location evidence="1">Cell membrane</location>
        <topology evidence="1">Multi-pass membrane protein</topology>
    </subcellularLocation>
</comment>
<comment type="similarity">
    <text evidence="1">Belongs to the NRAMP family.</text>
</comment>
<comment type="sequence caution" evidence="2">
    <conflict type="erroneous initiation">
        <sequence resource="EMBL-CDS" id="AAA63075"/>
    </conflict>
    <text>Truncated N-terminus.</text>
</comment>
<feature type="chain" id="PRO_0000212626" description="Divalent metal cation transporter MntH">
    <location>
        <begin position="1"/>
        <end position="426"/>
    </location>
</feature>
<feature type="transmembrane region" description="Helical" evidence="1">
    <location>
        <begin position="31"/>
        <end position="51"/>
    </location>
</feature>
<feature type="transmembrane region" description="Helical" evidence="1">
    <location>
        <begin position="58"/>
        <end position="78"/>
    </location>
</feature>
<feature type="transmembrane region" description="Helical" evidence="1">
    <location>
        <begin position="134"/>
        <end position="156"/>
    </location>
</feature>
<feature type="transmembrane region" description="Helical" evidence="1">
    <location>
        <begin position="169"/>
        <end position="189"/>
    </location>
</feature>
<feature type="transmembrane region" description="Helical" evidence="1">
    <location>
        <begin position="208"/>
        <end position="228"/>
    </location>
</feature>
<feature type="transmembrane region" description="Helical" evidence="1">
    <location>
        <begin position="256"/>
        <end position="276"/>
    </location>
</feature>
<feature type="transmembrane region" description="Helical" evidence="1">
    <location>
        <begin position="298"/>
        <end position="318"/>
    </location>
</feature>
<feature type="transmembrane region" description="Helical" evidence="1">
    <location>
        <begin position="337"/>
        <end position="357"/>
    </location>
</feature>
<feature type="transmembrane region" description="Helical" evidence="1">
    <location>
        <begin position="363"/>
        <end position="383"/>
    </location>
</feature>
<feature type="transmembrane region" description="Helical" evidence="1">
    <location>
        <begin position="402"/>
        <end position="422"/>
    </location>
</feature>
<reference key="1">
    <citation type="submission" date="1994-09" db="EMBL/GenBank/DDBJ databases">
        <authorList>
            <person name="Smith D.R."/>
            <person name="Robison K."/>
        </authorList>
    </citation>
    <scope>NUCLEOTIDE SEQUENCE [GENOMIC DNA]</scope>
</reference>
<reference key="2">
    <citation type="journal article" date="2001" name="Nature">
        <title>Massive gene decay in the leprosy bacillus.</title>
        <authorList>
            <person name="Cole S.T."/>
            <person name="Eiglmeier K."/>
            <person name="Parkhill J."/>
            <person name="James K.D."/>
            <person name="Thomson N.R."/>
            <person name="Wheeler P.R."/>
            <person name="Honore N."/>
            <person name="Garnier T."/>
            <person name="Churcher C.M."/>
            <person name="Harris D.E."/>
            <person name="Mungall K.L."/>
            <person name="Basham D."/>
            <person name="Brown D."/>
            <person name="Chillingworth T."/>
            <person name="Connor R."/>
            <person name="Davies R.M."/>
            <person name="Devlin K."/>
            <person name="Duthoy S."/>
            <person name="Feltwell T."/>
            <person name="Fraser A."/>
            <person name="Hamlin N."/>
            <person name="Holroyd S."/>
            <person name="Hornsby T."/>
            <person name="Jagels K."/>
            <person name="Lacroix C."/>
            <person name="Maclean J."/>
            <person name="Moule S."/>
            <person name="Murphy L.D."/>
            <person name="Oliver K."/>
            <person name="Quail M.A."/>
            <person name="Rajandream M.A."/>
            <person name="Rutherford K.M."/>
            <person name="Rutter S."/>
            <person name="Seeger K."/>
            <person name="Simon S."/>
            <person name="Simmonds M."/>
            <person name="Skelton J."/>
            <person name="Squares R."/>
            <person name="Squares S."/>
            <person name="Stevens K."/>
            <person name="Taylor K."/>
            <person name="Whitehead S."/>
            <person name="Woodward J.R."/>
            <person name="Barrell B.G."/>
        </authorList>
    </citation>
    <scope>NUCLEOTIDE SEQUENCE [LARGE SCALE GENOMIC DNA]</scope>
    <source>
        <strain>TN</strain>
    </source>
</reference>
<sequence>MFVNLTCLSEGNGSRGKALAESTQAELKTSWYLLGPAFVAAIAYVDPGNVAANVSSGAQFGYLQLWVVVVANVLAGLVQYLSAKLGLVTGQSLPQAISKQMSHPFRLGFWLQAELVAMATDVAEIVGGAIAFHILFRVSLLLGGVITGTVSLLLLMVKDRRGQLLFERVITGLLFVIVVGFTSSFFVATPSPEDMVNGLLPRFQGTESVLLAAAIIGATVMPHAVYLHSGLALDRHGHPHAGRSRRRLLRVTRLDVILAMTIAGIVNTAMLLVAAINLQHHQVTAYIEGTYTAIQDTLGATIAMLFAIGLLASSLASASVGAYAGALIMQGLLQRSIPMLIRRLITLCPAIAILALGFDPTRALVLSQIVLSFGIPFAVLPLVKLTNNRGLMGNDTNHPATTVLGWAVAILVSLLNVVLIYLTVTS</sequence>
<gene>
    <name evidence="1" type="primary">mntH</name>
    <name type="synonym">bcg</name>
    <name type="ordered locus">ML2098</name>
</gene>
<evidence type="ECO:0000255" key="1">
    <source>
        <dbReference type="HAMAP-Rule" id="MF_00221"/>
    </source>
</evidence>
<evidence type="ECO:0000305" key="2"/>
<organism>
    <name type="scientific">Mycobacterium leprae (strain TN)</name>
    <dbReference type="NCBI Taxonomy" id="272631"/>
    <lineage>
        <taxon>Bacteria</taxon>
        <taxon>Bacillati</taxon>
        <taxon>Actinomycetota</taxon>
        <taxon>Actinomycetes</taxon>
        <taxon>Mycobacteriales</taxon>
        <taxon>Mycobacteriaceae</taxon>
        <taxon>Mycobacterium</taxon>
    </lineage>
</organism>
<dbReference type="EMBL" id="U15184">
    <property type="protein sequence ID" value="AAA63075.1"/>
    <property type="status" value="ALT_INIT"/>
    <property type="molecule type" value="Genomic_DNA"/>
</dbReference>
<dbReference type="EMBL" id="AL583924">
    <property type="protein sequence ID" value="CAC31053.1"/>
    <property type="molecule type" value="Genomic_DNA"/>
</dbReference>
<dbReference type="PIR" id="E87171">
    <property type="entry name" value="E87171"/>
</dbReference>
<dbReference type="RefSeq" id="NP_302396.1">
    <property type="nucleotide sequence ID" value="NC_002677.1"/>
</dbReference>
<dbReference type="RefSeq" id="WP_010908716.1">
    <property type="nucleotide sequence ID" value="NC_002677.1"/>
</dbReference>
<dbReference type="SMR" id="Q50103"/>
<dbReference type="STRING" id="272631.gene:17575950"/>
<dbReference type="KEGG" id="mle:ML2098"/>
<dbReference type="PATRIC" id="fig|272631.5.peg.3948"/>
<dbReference type="Leproma" id="ML2098"/>
<dbReference type="eggNOG" id="COG1914">
    <property type="taxonomic scope" value="Bacteria"/>
</dbReference>
<dbReference type="HOGENOM" id="CLU_020088_2_0_11"/>
<dbReference type="OrthoDB" id="9787548at2"/>
<dbReference type="Proteomes" id="UP000000806">
    <property type="component" value="Chromosome"/>
</dbReference>
<dbReference type="GO" id="GO:0005886">
    <property type="term" value="C:plasma membrane"/>
    <property type="evidence" value="ECO:0007669"/>
    <property type="project" value="UniProtKB-SubCell"/>
</dbReference>
<dbReference type="GO" id="GO:0015086">
    <property type="term" value="F:cadmium ion transmembrane transporter activity"/>
    <property type="evidence" value="ECO:0007669"/>
    <property type="project" value="TreeGrafter"/>
</dbReference>
<dbReference type="GO" id="GO:0005384">
    <property type="term" value="F:manganese ion transmembrane transporter activity"/>
    <property type="evidence" value="ECO:0007669"/>
    <property type="project" value="TreeGrafter"/>
</dbReference>
<dbReference type="GO" id="GO:0046872">
    <property type="term" value="F:metal ion binding"/>
    <property type="evidence" value="ECO:0007669"/>
    <property type="project" value="UniProtKB-UniRule"/>
</dbReference>
<dbReference type="GO" id="GO:0015293">
    <property type="term" value="F:symporter activity"/>
    <property type="evidence" value="ECO:0007669"/>
    <property type="project" value="UniProtKB-UniRule"/>
</dbReference>
<dbReference type="GO" id="GO:0034755">
    <property type="term" value="P:iron ion transmembrane transport"/>
    <property type="evidence" value="ECO:0007669"/>
    <property type="project" value="TreeGrafter"/>
</dbReference>
<dbReference type="HAMAP" id="MF_00221">
    <property type="entry name" value="NRAMP"/>
    <property type="match status" value="1"/>
</dbReference>
<dbReference type="InterPro" id="IPR001046">
    <property type="entry name" value="NRAMP_fam"/>
</dbReference>
<dbReference type="NCBIfam" id="NF037982">
    <property type="entry name" value="Nramp_1"/>
    <property type="match status" value="1"/>
</dbReference>
<dbReference type="NCBIfam" id="NF001923">
    <property type="entry name" value="PRK00701.1"/>
    <property type="match status" value="1"/>
</dbReference>
<dbReference type="PANTHER" id="PTHR11706:SF33">
    <property type="entry name" value="NATURAL RESISTANCE-ASSOCIATED MACROPHAGE PROTEIN 2"/>
    <property type="match status" value="1"/>
</dbReference>
<dbReference type="PANTHER" id="PTHR11706">
    <property type="entry name" value="SOLUTE CARRIER PROTEIN FAMILY 11 MEMBER"/>
    <property type="match status" value="1"/>
</dbReference>
<dbReference type="Pfam" id="PF01566">
    <property type="entry name" value="Nramp"/>
    <property type="match status" value="1"/>
</dbReference>
<dbReference type="PRINTS" id="PR00447">
    <property type="entry name" value="NATRESASSCMP"/>
</dbReference>
<name>MNTH_MYCLE</name>
<keyword id="KW-1003">Cell membrane</keyword>
<keyword id="KW-0406">Ion transport</keyword>
<keyword id="KW-0472">Membrane</keyword>
<keyword id="KW-1185">Reference proteome</keyword>
<keyword id="KW-0769">Symport</keyword>
<keyword id="KW-0812">Transmembrane</keyword>
<keyword id="KW-1133">Transmembrane helix</keyword>
<keyword id="KW-0813">Transport</keyword>